<protein>
    <recommendedName>
        <fullName evidence="1">ATP synthase gamma chain</fullName>
    </recommendedName>
    <alternativeName>
        <fullName evidence="1">ATP synthase F1 sector gamma subunit</fullName>
    </alternativeName>
    <alternativeName>
        <fullName evidence="1">F-ATPase gamma subunit</fullName>
    </alternativeName>
</protein>
<accession>A3M143</accession>
<evidence type="ECO:0000255" key="1">
    <source>
        <dbReference type="HAMAP-Rule" id="MF_00815"/>
    </source>
</evidence>
<evidence type="ECO:0007829" key="2">
    <source>
        <dbReference type="PDB" id="7P2Y"/>
    </source>
</evidence>
<feature type="chain" id="PRO_1000134096" description="ATP synthase gamma chain">
    <location>
        <begin position="1"/>
        <end position="289"/>
    </location>
</feature>
<feature type="helix" evidence="2">
    <location>
        <begin position="4"/>
        <end position="41"/>
    </location>
</feature>
<feature type="helix" evidence="2">
    <location>
        <begin position="43"/>
        <end position="59"/>
    </location>
</feature>
<feature type="strand" evidence="2">
    <location>
        <begin position="74"/>
        <end position="81"/>
    </location>
</feature>
<feature type="helix" evidence="2">
    <location>
        <begin position="91"/>
        <end position="108"/>
    </location>
</feature>
<feature type="strand" evidence="2">
    <location>
        <begin position="112"/>
        <end position="119"/>
    </location>
</feature>
<feature type="helix" evidence="2">
    <location>
        <begin position="120"/>
        <end position="128"/>
    </location>
</feature>
<feature type="strand" evidence="2">
    <location>
        <begin position="133"/>
        <end position="137"/>
    </location>
</feature>
<feature type="helix" evidence="2">
    <location>
        <begin position="146"/>
        <end position="161"/>
    </location>
</feature>
<feature type="strand" evidence="2">
    <location>
        <begin position="166"/>
        <end position="175"/>
    </location>
</feature>
<feature type="strand" evidence="2">
    <location>
        <begin position="177"/>
        <end position="179"/>
    </location>
</feature>
<feature type="strand" evidence="2">
    <location>
        <begin position="181"/>
        <end position="187"/>
    </location>
</feature>
<feature type="turn" evidence="2">
    <location>
        <begin position="196"/>
        <end position="199"/>
    </location>
</feature>
<feature type="strand" evidence="2">
    <location>
        <begin position="200"/>
        <end position="202"/>
    </location>
</feature>
<feature type="strand" evidence="2">
    <location>
        <begin position="210"/>
        <end position="212"/>
    </location>
</feature>
<feature type="helix" evidence="2">
    <location>
        <begin position="214"/>
        <end position="287"/>
    </location>
</feature>
<name>ATPG_ACIBT</name>
<reference key="1">
    <citation type="journal article" date="2007" name="Genes Dev.">
        <title>New insights into Acinetobacter baumannii pathogenesis revealed by high-density pyrosequencing and transposon mutagenesis.</title>
        <authorList>
            <person name="Smith M.G."/>
            <person name="Gianoulis T.A."/>
            <person name="Pukatzki S."/>
            <person name="Mekalanos J.J."/>
            <person name="Ornston L.N."/>
            <person name="Gerstein M."/>
            <person name="Snyder M."/>
        </authorList>
    </citation>
    <scope>NUCLEOTIDE SEQUENCE [LARGE SCALE GENOMIC DNA]</scope>
    <source>
        <strain>ATCC 17978 / DSM 105126 / CIP 53.77 / LMG 1025 / NCDC KC755 / 5377</strain>
    </source>
</reference>
<proteinExistence type="evidence at protein level"/>
<sequence length="289" mass="32096">MANLKEIRAKVASIKSTQKITRAMQMVAASKMRRAQERMAQGRPYADNMRRVIAHLVQANPEYKHRYMVDRPVKRVGYIIVSSDRGLAGGLNINLFKKVVQHVKAQQEQSIEVQFALIGQKAVSFFKNYGGKVLGATTQIGDAPSLEQLTGSVQVMLDAFDKGELDRIYLVSNGFVNAMTQKPKVEQLVPLAPAEEGDDLNRTYGWDYIYEPEAEELLNGLLVRYIESMVYQGVIENVACEQSARMVAMKAATDNAGQLIKDLQLIYNKLRQAAITQEISEIVGGAAAV</sequence>
<organism>
    <name type="scientific">Acinetobacter baumannii (strain ATCC 17978 / DSM 105126 / CIP 53.77 / LMG 1025 / NCDC KC755 / 5377)</name>
    <dbReference type="NCBI Taxonomy" id="400667"/>
    <lineage>
        <taxon>Bacteria</taxon>
        <taxon>Pseudomonadati</taxon>
        <taxon>Pseudomonadota</taxon>
        <taxon>Gammaproteobacteria</taxon>
        <taxon>Moraxellales</taxon>
        <taxon>Moraxellaceae</taxon>
        <taxon>Acinetobacter</taxon>
        <taxon>Acinetobacter calcoaceticus/baumannii complex</taxon>
    </lineage>
</organism>
<gene>
    <name evidence="1" type="primary">atpG</name>
    <name type="ordered locus">A1S_0154</name>
</gene>
<keyword id="KW-0002">3D-structure</keyword>
<keyword id="KW-0066">ATP synthesis</keyword>
<keyword id="KW-0997">Cell inner membrane</keyword>
<keyword id="KW-1003">Cell membrane</keyword>
<keyword id="KW-0139">CF(1)</keyword>
<keyword id="KW-0375">Hydrogen ion transport</keyword>
<keyword id="KW-0406">Ion transport</keyword>
<keyword id="KW-0472">Membrane</keyword>
<keyword id="KW-0813">Transport</keyword>
<comment type="function">
    <text evidence="1">Produces ATP from ADP in the presence of a proton gradient across the membrane. The gamma chain is believed to be important in regulating ATPase activity and the flow of protons through the CF(0) complex.</text>
</comment>
<comment type="subunit">
    <text evidence="1">F-type ATPases have 2 components, CF(1) - the catalytic core - and CF(0) - the membrane proton channel. CF(1) has five subunits: alpha(3), beta(3), gamma(1), delta(1), epsilon(1). CF(0) has three main subunits: a, b and c.</text>
</comment>
<comment type="subcellular location">
    <subcellularLocation>
        <location evidence="1">Cell inner membrane</location>
        <topology evidence="1">Peripheral membrane protein</topology>
    </subcellularLocation>
</comment>
<comment type="similarity">
    <text evidence="1">Belongs to the ATPase gamma chain family.</text>
</comment>
<dbReference type="EMBL" id="CP000521">
    <property type="protein sequence ID" value="ABO10637.2"/>
    <property type="molecule type" value="Genomic_DNA"/>
</dbReference>
<dbReference type="RefSeq" id="WP_001284971.1">
    <property type="nucleotide sequence ID" value="NZ_CP053098.1"/>
</dbReference>
<dbReference type="PDB" id="7P2Y">
    <property type="method" value="EM"/>
    <property type="resolution" value="3.10 A"/>
    <property type="chains" value="g=1-289"/>
</dbReference>
<dbReference type="PDB" id="7P3N">
    <property type="method" value="EM"/>
    <property type="resolution" value="4.60 A"/>
    <property type="chains" value="g=1-289"/>
</dbReference>
<dbReference type="PDB" id="7P3W">
    <property type="method" value="EM"/>
    <property type="resolution" value="4.30 A"/>
    <property type="chains" value="g=1-289"/>
</dbReference>
<dbReference type="PDB" id="7YRY">
    <property type="method" value="EM"/>
    <property type="resolution" value="3.00 A"/>
    <property type="chains" value="g=1-289"/>
</dbReference>
<dbReference type="PDB" id="8ZI0">
    <property type="method" value="EM"/>
    <property type="resolution" value="3.18 A"/>
    <property type="chains" value="g=1-289"/>
</dbReference>
<dbReference type="PDB" id="8ZI1">
    <property type="method" value="EM"/>
    <property type="resolution" value="2.92 A"/>
    <property type="chains" value="g=1-289"/>
</dbReference>
<dbReference type="PDB" id="8ZI2">
    <property type="method" value="EM"/>
    <property type="resolution" value="2.99 A"/>
    <property type="chains" value="g=1-289"/>
</dbReference>
<dbReference type="PDB" id="8ZI3">
    <property type="method" value="EM"/>
    <property type="resolution" value="2.89 A"/>
    <property type="chains" value="g=1-289"/>
</dbReference>
<dbReference type="PDBsum" id="7P2Y"/>
<dbReference type="PDBsum" id="7P3N"/>
<dbReference type="PDBsum" id="7P3W"/>
<dbReference type="PDBsum" id="7YRY"/>
<dbReference type="PDBsum" id="8ZI0"/>
<dbReference type="PDBsum" id="8ZI1"/>
<dbReference type="PDBsum" id="8ZI2"/>
<dbReference type="PDBsum" id="8ZI3"/>
<dbReference type="EMDB" id="EMD-13174"/>
<dbReference type="EMDB" id="EMD-13181"/>
<dbReference type="EMDB" id="EMD-13186"/>
<dbReference type="EMDB" id="EMD-34066"/>
<dbReference type="EMDB" id="EMD-60117"/>
<dbReference type="EMDB" id="EMD-60118"/>
<dbReference type="EMDB" id="EMD-60119"/>
<dbReference type="EMDB" id="EMD-60120"/>
<dbReference type="SMR" id="A3M143"/>
<dbReference type="GeneID" id="92892166"/>
<dbReference type="KEGG" id="acb:A1S_0154"/>
<dbReference type="HOGENOM" id="CLU_050669_0_1_6"/>
<dbReference type="GO" id="GO:0005886">
    <property type="term" value="C:plasma membrane"/>
    <property type="evidence" value="ECO:0007669"/>
    <property type="project" value="UniProtKB-SubCell"/>
</dbReference>
<dbReference type="GO" id="GO:0045259">
    <property type="term" value="C:proton-transporting ATP synthase complex"/>
    <property type="evidence" value="ECO:0007669"/>
    <property type="project" value="UniProtKB-KW"/>
</dbReference>
<dbReference type="GO" id="GO:0005524">
    <property type="term" value="F:ATP binding"/>
    <property type="evidence" value="ECO:0007669"/>
    <property type="project" value="UniProtKB-UniRule"/>
</dbReference>
<dbReference type="GO" id="GO:0046933">
    <property type="term" value="F:proton-transporting ATP synthase activity, rotational mechanism"/>
    <property type="evidence" value="ECO:0007669"/>
    <property type="project" value="UniProtKB-UniRule"/>
</dbReference>
<dbReference type="GO" id="GO:0042777">
    <property type="term" value="P:proton motive force-driven plasma membrane ATP synthesis"/>
    <property type="evidence" value="ECO:0007669"/>
    <property type="project" value="UniProtKB-UniRule"/>
</dbReference>
<dbReference type="CDD" id="cd12151">
    <property type="entry name" value="F1-ATPase_gamma"/>
    <property type="match status" value="1"/>
</dbReference>
<dbReference type="FunFam" id="1.10.287.80:FF:000005">
    <property type="entry name" value="ATP synthase gamma chain"/>
    <property type="match status" value="1"/>
</dbReference>
<dbReference type="Gene3D" id="3.40.1380.10">
    <property type="match status" value="1"/>
</dbReference>
<dbReference type="Gene3D" id="1.10.287.80">
    <property type="entry name" value="ATP synthase, gamma subunit, helix hairpin domain"/>
    <property type="match status" value="1"/>
</dbReference>
<dbReference type="HAMAP" id="MF_00815">
    <property type="entry name" value="ATP_synth_gamma_bact"/>
    <property type="match status" value="1"/>
</dbReference>
<dbReference type="InterPro" id="IPR035968">
    <property type="entry name" value="ATP_synth_F1_ATPase_gsu"/>
</dbReference>
<dbReference type="InterPro" id="IPR000131">
    <property type="entry name" value="ATP_synth_F1_gsu"/>
</dbReference>
<dbReference type="InterPro" id="IPR023632">
    <property type="entry name" value="ATP_synth_F1_gsu_CS"/>
</dbReference>
<dbReference type="NCBIfam" id="TIGR01146">
    <property type="entry name" value="ATPsyn_F1gamma"/>
    <property type="match status" value="1"/>
</dbReference>
<dbReference type="NCBIfam" id="NF004144">
    <property type="entry name" value="PRK05621.1-1"/>
    <property type="match status" value="1"/>
</dbReference>
<dbReference type="PANTHER" id="PTHR11693">
    <property type="entry name" value="ATP SYNTHASE GAMMA CHAIN"/>
    <property type="match status" value="1"/>
</dbReference>
<dbReference type="PANTHER" id="PTHR11693:SF22">
    <property type="entry name" value="ATP SYNTHASE SUBUNIT GAMMA, MITOCHONDRIAL"/>
    <property type="match status" value="1"/>
</dbReference>
<dbReference type="Pfam" id="PF00231">
    <property type="entry name" value="ATP-synt"/>
    <property type="match status" value="1"/>
</dbReference>
<dbReference type="PRINTS" id="PR00126">
    <property type="entry name" value="ATPASEGAMMA"/>
</dbReference>
<dbReference type="SUPFAM" id="SSF52943">
    <property type="entry name" value="ATP synthase (F1-ATPase), gamma subunit"/>
    <property type="match status" value="1"/>
</dbReference>
<dbReference type="PROSITE" id="PS00153">
    <property type="entry name" value="ATPASE_GAMMA"/>
    <property type="match status" value="1"/>
</dbReference>